<protein>
    <recommendedName>
        <fullName evidence="1">Queuine tRNA-ribosyltransferase</fullName>
        <ecNumber evidence="1">2.4.2.29</ecNumber>
    </recommendedName>
    <alternativeName>
        <fullName evidence="1">Guanine insertion enzyme</fullName>
    </alternativeName>
    <alternativeName>
        <fullName evidence="1">tRNA-guanine transglycosylase</fullName>
    </alternativeName>
</protein>
<keyword id="KW-0328">Glycosyltransferase</keyword>
<keyword id="KW-0479">Metal-binding</keyword>
<keyword id="KW-0671">Queuosine biosynthesis</keyword>
<keyword id="KW-0808">Transferase</keyword>
<keyword id="KW-0819">tRNA processing</keyword>
<keyword id="KW-0862">Zinc</keyword>
<name>TGT_CLOPS</name>
<sequence length="380" mass="43186">MTKKRYTLLKKDGKARRGEFVTPHGTIQTPVFMNVGTLAAIKGAVSSMDLKEIGCQVELSNTYHLHLRPGDKIVKQMGGLHNFMNWDRPILTDSGGFQVFSLAGMRKIKEEGVYFNSHIDGRKIFMGPEESMQIQSNLGSTIAMAFDECIPNPSTREYVEKSVARTTRWLERCKKEMDRLNSLDDTVNKEQMLFGINQGGVYEDIRIEHAKTIREMDLDGYAIGGLAVGETHEEMYRVIDAVVPHLPEDKPIYLMGVGLPSNILEAVERGVDFFDCVLPARNGRHGHVFTKEGKINLMNAKFELDARPIDEGCQCPACKNYTRAYIRHLFKAKEMLAMRLCVLHNLYFYNKLMEDIRDAIDGGYFAEFKAKKLEEWNGRA</sequence>
<reference key="1">
    <citation type="journal article" date="2006" name="Genome Res.">
        <title>Skewed genomic variability in strains of the toxigenic bacterial pathogen, Clostridium perfringens.</title>
        <authorList>
            <person name="Myers G.S.A."/>
            <person name="Rasko D.A."/>
            <person name="Cheung J.K."/>
            <person name="Ravel J."/>
            <person name="Seshadri R."/>
            <person name="DeBoy R.T."/>
            <person name="Ren Q."/>
            <person name="Varga J."/>
            <person name="Awad M.M."/>
            <person name="Brinkac L.M."/>
            <person name="Daugherty S.C."/>
            <person name="Haft D.H."/>
            <person name="Dodson R.J."/>
            <person name="Madupu R."/>
            <person name="Nelson W.C."/>
            <person name="Rosovitz M.J."/>
            <person name="Sullivan S.A."/>
            <person name="Khouri H."/>
            <person name="Dimitrov G.I."/>
            <person name="Watkins K.L."/>
            <person name="Mulligan S."/>
            <person name="Benton J."/>
            <person name="Radune D."/>
            <person name="Fisher D.J."/>
            <person name="Atkins H.S."/>
            <person name="Hiscox T."/>
            <person name="Jost B.H."/>
            <person name="Billington S.J."/>
            <person name="Songer J.G."/>
            <person name="McClane B.A."/>
            <person name="Titball R.W."/>
            <person name="Rood J.I."/>
            <person name="Melville S.B."/>
            <person name="Paulsen I.T."/>
        </authorList>
    </citation>
    <scope>NUCLEOTIDE SEQUENCE [LARGE SCALE GENOMIC DNA]</scope>
    <source>
        <strain>SM101 / Type A</strain>
    </source>
</reference>
<gene>
    <name evidence="1" type="primary">tgt</name>
    <name type="ordered locus">CPR_1912</name>
</gene>
<dbReference type="EC" id="2.4.2.29" evidence="1"/>
<dbReference type="EMBL" id="CP000312">
    <property type="protein sequence ID" value="ABG87624.1"/>
    <property type="molecule type" value="Genomic_DNA"/>
</dbReference>
<dbReference type="RefSeq" id="WP_003451459.1">
    <property type="nucleotide sequence ID" value="NC_008262.1"/>
</dbReference>
<dbReference type="SMR" id="Q0SRN5"/>
<dbReference type="GeneID" id="93001518"/>
<dbReference type="KEGG" id="cpr:CPR_1912"/>
<dbReference type="UniPathway" id="UPA00392"/>
<dbReference type="Proteomes" id="UP000001824">
    <property type="component" value="Chromosome"/>
</dbReference>
<dbReference type="GO" id="GO:0005829">
    <property type="term" value="C:cytosol"/>
    <property type="evidence" value="ECO:0007669"/>
    <property type="project" value="TreeGrafter"/>
</dbReference>
<dbReference type="GO" id="GO:0046872">
    <property type="term" value="F:metal ion binding"/>
    <property type="evidence" value="ECO:0007669"/>
    <property type="project" value="UniProtKB-KW"/>
</dbReference>
<dbReference type="GO" id="GO:0008479">
    <property type="term" value="F:tRNA-guanosine(34) queuine transglycosylase activity"/>
    <property type="evidence" value="ECO:0007669"/>
    <property type="project" value="UniProtKB-UniRule"/>
</dbReference>
<dbReference type="GO" id="GO:0008616">
    <property type="term" value="P:queuosine biosynthetic process"/>
    <property type="evidence" value="ECO:0007669"/>
    <property type="project" value="UniProtKB-UniRule"/>
</dbReference>
<dbReference type="GO" id="GO:0002099">
    <property type="term" value="P:tRNA wobble guanine modification"/>
    <property type="evidence" value="ECO:0007669"/>
    <property type="project" value="TreeGrafter"/>
</dbReference>
<dbReference type="GO" id="GO:0101030">
    <property type="term" value="P:tRNA-guanine transglycosylation"/>
    <property type="evidence" value="ECO:0007669"/>
    <property type="project" value="InterPro"/>
</dbReference>
<dbReference type="FunFam" id="3.20.20.105:FF:000001">
    <property type="entry name" value="Queuine tRNA-ribosyltransferase"/>
    <property type="match status" value="1"/>
</dbReference>
<dbReference type="Gene3D" id="3.20.20.105">
    <property type="entry name" value="Queuine tRNA-ribosyltransferase-like"/>
    <property type="match status" value="1"/>
</dbReference>
<dbReference type="HAMAP" id="MF_00168">
    <property type="entry name" value="Q_tRNA_Tgt"/>
    <property type="match status" value="1"/>
</dbReference>
<dbReference type="InterPro" id="IPR050076">
    <property type="entry name" value="ArchSynthase1/Queuine_TRR"/>
</dbReference>
<dbReference type="InterPro" id="IPR004803">
    <property type="entry name" value="TGT"/>
</dbReference>
<dbReference type="InterPro" id="IPR036511">
    <property type="entry name" value="TGT-like_sf"/>
</dbReference>
<dbReference type="InterPro" id="IPR002616">
    <property type="entry name" value="tRNA_ribo_trans-like"/>
</dbReference>
<dbReference type="NCBIfam" id="TIGR00430">
    <property type="entry name" value="Q_tRNA_tgt"/>
    <property type="match status" value="1"/>
</dbReference>
<dbReference type="NCBIfam" id="TIGR00449">
    <property type="entry name" value="tgt_general"/>
    <property type="match status" value="1"/>
</dbReference>
<dbReference type="PANTHER" id="PTHR46499">
    <property type="entry name" value="QUEUINE TRNA-RIBOSYLTRANSFERASE"/>
    <property type="match status" value="1"/>
</dbReference>
<dbReference type="PANTHER" id="PTHR46499:SF1">
    <property type="entry name" value="QUEUINE TRNA-RIBOSYLTRANSFERASE"/>
    <property type="match status" value="1"/>
</dbReference>
<dbReference type="Pfam" id="PF01702">
    <property type="entry name" value="TGT"/>
    <property type="match status" value="1"/>
</dbReference>
<dbReference type="SUPFAM" id="SSF51713">
    <property type="entry name" value="tRNA-guanine transglycosylase"/>
    <property type="match status" value="1"/>
</dbReference>
<organism>
    <name type="scientific">Clostridium perfringens (strain SM101 / Type A)</name>
    <dbReference type="NCBI Taxonomy" id="289380"/>
    <lineage>
        <taxon>Bacteria</taxon>
        <taxon>Bacillati</taxon>
        <taxon>Bacillota</taxon>
        <taxon>Clostridia</taxon>
        <taxon>Eubacteriales</taxon>
        <taxon>Clostridiaceae</taxon>
        <taxon>Clostridium</taxon>
    </lineage>
</organism>
<proteinExistence type="inferred from homology"/>
<evidence type="ECO:0000255" key="1">
    <source>
        <dbReference type="HAMAP-Rule" id="MF_00168"/>
    </source>
</evidence>
<comment type="function">
    <text evidence="1">Catalyzes the base-exchange of a guanine (G) residue with the queuine precursor 7-aminomethyl-7-deazaguanine (PreQ1) at position 34 (anticodon wobble position) in tRNAs with GU(N) anticodons (tRNA-Asp, -Asn, -His and -Tyr). Catalysis occurs through a double-displacement mechanism. The nucleophile active site attacks the C1' of nucleotide 34 to detach the guanine base from the RNA, forming a covalent enzyme-RNA intermediate. The proton acceptor active site deprotonates the incoming PreQ1, allowing a nucleophilic attack on the C1' of the ribose to form the product. After dissociation, two additional enzymatic reactions on the tRNA convert PreQ1 to queuine (Q), resulting in the hypermodified nucleoside queuosine (7-(((4,5-cis-dihydroxy-2-cyclopenten-1-yl)amino)methyl)-7-deazaguanosine).</text>
</comment>
<comment type="catalytic activity">
    <reaction evidence="1">
        <text>7-aminomethyl-7-carbaguanine + guanosine(34) in tRNA = 7-aminomethyl-7-carbaguanosine(34) in tRNA + guanine</text>
        <dbReference type="Rhea" id="RHEA:24104"/>
        <dbReference type="Rhea" id="RHEA-COMP:10341"/>
        <dbReference type="Rhea" id="RHEA-COMP:10342"/>
        <dbReference type="ChEBI" id="CHEBI:16235"/>
        <dbReference type="ChEBI" id="CHEBI:58703"/>
        <dbReference type="ChEBI" id="CHEBI:74269"/>
        <dbReference type="ChEBI" id="CHEBI:82833"/>
        <dbReference type="EC" id="2.4.2.29"/>
    </reaction>
</comment>
<comment type="cofactor">
    <cofactor evidence="1">
        <name>Zn(2+)</name>
        <dbReference type="ChEBI" id="CHEBI:29105"/>
    </cofactor>
    <text evidence="1">Binds 1 zinc ion per subunit.</text>
</comment>
<comment type="pathway">
    <text evidence="1">tRNA modification; tRNA-queuosine biosynthesis.</text>
</comment>
<comment type="subunit">
    <text evidence="1">Homodimer. Within each dimer, one monomer is responsible for RNA recognition and catalysis, while the other monomer binds to the replacement base PreQ1.</text>
</comment>
<comment type="similarity">
    <text evidence="1">Belongs to the queuine tRNA-ribosyltransferase family.</text>
</comment>
<feature type="chain" id="PRO_1000016783" description="Queuine tRNA-ribosyltransferase">
    <location>
        <begin position="1"/>
        <end position="380"/>
    </location>
</feature>
<feature type="region of interest" description="RNA binding" evidence="1">
    <location>
        <begin position="256"/>
        <end position="262"/>
    </location>
</feature>
<feature type="region of interest" description="RNA binding; important for wobble base 34 recognition" evidence="1">
    <location>
        <begin position="280"/>
        <end position="284"/>
    </location>
</feature>
<feature type="active site" description="Proton acceptor" evidence="1">
    <location>
        <position position="93"/>
    </location>
</feature>
<feature type="active site" description="Nucleophile" evidence="1">
    <location>
        <position position="275"/>
    </location>
</feature>
<feature type="binding site" evidence="1">
    <location>
        <begin position="93"/>
        <end position="97"/>
    </location>
    <ligand>
        <name>substrate</name>
    </ligand>
</feature>
<feature type="binding site" evidence="1">
    <location>
        <position position="147"/>
    </location>
    <ligand>
        <name>substrate</name>
    </ligand>
</feature>
<feature type="binding site" evidence="1">
    <location>
        <position position="198"/>
    </location>
    <ligand>
        <name>substrate</name>
    </ligand>
</feature>
<feature type="binding site" evidence="1">
    <location>
        <position position="225"/>
    </location>
    <ligand>
        <name>substrate</name>
    </ligand>
</feature>
<feature type="binding site" evidence="1">
    <location>
        <position position="313"/>
    </location>
    <ligand>
        <name>Zn(2+)</name>
        <dbReference type="ChEBI" id="CHEBI:29105"/>
    </ligand>
</feature>
<feature type="binding site" evidence="1">
    <location>
        <position position="315"/>
    </location>
    <ligand>
        <name>Zn(2+)</name>
        <dbReference type="ChEBI" id="CHEBI:29105"/>
    </ligand>
</feature>
<feature type="binding site" evidence="1">
    <location>
        <position position="318"/>
    </location>
    <ligand>
        <name>Zn(2+)</name>
        <dbReference type="ChEBI" id="CHEBI:29105"/>
    </ligand>
</feature>
<feature type="binding site" evidence="1">
    <location>
        <position position="344"/>
    </location>
    <ligand>
        <name>Zn(2+)</name>
        <dbReference type="ChEBI" id="CHEBI:29105"/>
    </ligand>
</feature>
<accession>Q0SRN5</accession>